<keyword id="KW-0227">DNA damage</keyword>
<keyword id="KW-0233">DNA recombination</keyword>
<keyword id="KW-0234">DNA repair</keyword>
<keyword id="KW-0479">Metal-binding</keyword>
<keyword id="KW-1185">Reference proteome</keyword>
<keyword id="KW-0862">Zinc</keyword>
<keyword id="KW-0863">Zinc-finger</keyword>
<organism>
    <name type="scientific">Francisella tularensis subsp. holarctica (strain LVS)</name>
    <dbReference type="NCBI Taxonomy" id="376619"/>
    <lineage>
        <taxon>Bacteria</taxon>
        <taxon>Pseudomonadati</taxon>
        <taxon>Pseudomonadota</taxon>
        <taxon>Gammaproteobacteria</taxon>
        <taxon>Thiotrichales</taxon>
        <taxon>Francisellaceae</taxon>
        <taxon>Francisella</taxon>
    </lineage>
</organism>
<dbReference type="EMBL" id="AM233362">
    <property type="protein sequence ID" value="CAJ79851.1"/>
    <property type="molecule type" value="Genomic_DNA"/>
</dbReference>
<dbReference type="RefSeq" id="WP_003016683.1">
    <property type="nucleotide sequence ID" value="NZ_CP009694.1"/>
</dbReference>
<dbReference type="SMR" id="Q2A2I5"/>
<dbReference type="KEGG" id="ftl:FTL_1412"/>
<dbReference type="Proteomes" id="UP000001944">
    <property type="component" value="Chromosome"/>
</dbReference>
<dbReference type="GO" id="GO:0003677">
    <property type="term" value="F:DNA binding"/>
    <property type="evidence" value="ECO:0007669"/>
    <property type="project" value="UniProtKB-UniRule"/>
</dbReference>
<dbReference type="GO" id="GO:0008270">
    <property type="term" value="F:zinc ion binding"/>
    <property type="evidence" value="ECO:0007669"/>
    <property type="project" value="UniProtKB-KW"/>
</dbReference>
<dbReference type="GO" id="GO:0006310">
    <property type="term" value="P:DNA recombination"/>
    <property type="evidence" value="ECO:0007669"/>
    <property type="project" value="UniProtKB-UniRule"/>
</dbReference>
<dbReference type="GO" id="GO:0006281">
    <property type="term" value="P:DNA repair"/>
    <property type="evidence" value="ECO:0007669"/>
    <property type="project" value="UniProtKB-UniRule"/>
</dbReference>
<dbReference type="CDD" id="cd01025">
    <property type="entry name" value="TOPRIM_recR"/>
    <property type="match status" value="1"/>
</dbReference>
<dbReference type="Gene3D" id="3.40.1360.10">
    <property type="match status" value="1"/>
</dbReference>
<dbReference type="Gene3D" id="6.10.250.240">
    <property type="match status" value="1"/>
</dbReference>
<dbReference type="Gene3D" id="1.10.8.420">
    <property type="entry name" value="RecR Domain 1"/>
    <property type="match status" value="1"/>
</dbReference>
<dbReference type="HAMAP" id="MF_00017">
    <property type="entry name" value="RecR"/>
    <property type="match status" value="1"/>
</dbReference>
<dbReference type="InterPro" id="IPR000093">
    <property type="entry name" value="DNA_Rcmb_RecR"/>
</dbReference>
<dbReference type="InterPro" id="IPR023627">
    <property type="entry name" value="Rcmb_RecR"/>
</dbReference>
<dbReference type="InterPro" id="IPR015967">
    <property type="entry name" value="Rcmb_RecR_Znf"/>
</dbReference>
<dbReference type="InterPro" id="IPR006171">
    <property type="entry name" value="TOPRIM_dom"/>
</dbReference>
<dbReference type="InterPro" id="IPR034137">
    <property type="entry name" value="TOPRIM_RecR"/>
</dbReference>
<dbReference type="NCBIfam" id="TIGR00615">
    <property type="entry name" value="recR"/>
    <property type="match status" value="1"/>
</dbReference>
<dbReference type="PANTHER" id="PTHR30446">
    <property type="entry name" value="RECOMBINATION PROTEIN RECR"/>
    <property type="match status" value="1"/>
</dbReference>
<dbReference type="PANTHER" id="PTHR30446:SF0">
    <property type="entry name" value="RECOMBINATION PROTEIN RECR"/>
    <property type="match status" value="1"/>
</dbReference>
<dbReference type="Pfam" id="PF21175">
    <property type="entry name" value="RecR_C"/>
    <property type="match status" value="1"/>
</dbReference>
<dbReference type="Pfam" id="PF21176">
    <property type="entry name" value="RecR_HhH"/>
    <property type="match status" value="1"/>
</dbReference>
<dbReference type="Pfam" id="PF02132">
    <property type="entry name" value="RecR_ZnF"/>
    <property type="match status" value="1"/>
</dbReference>
<dbReference type="Pfam" id="PF13662">
    <property type="entry name" value="Toprim_4"/>
    <property type="match status" value="1"/>
</dbReference>
<dbReference type="SMART" id="SM00493">
    <property type="entry name" value="TOPRIM"/>
    <property type="match status" value="1"/>
</dbReference>
<dbReference type="SUPFAM" id="SSF111304">
    <property type="entry name" value="Recombination protein RecR"/>
    <property type="match status" value="1"/>
</dbReference>
<dbReference type="PROSITE" id="PS01300">
    <property type="entry name" value="RECR"/>
    <property type="match status" value="1"/>
</dbReference>
<dbReference type="PROSITE" id="PS50880">
    <property type="entry name" value="TOPRIM"/>
    <property type="match status" value="1"/>
</dbReference>
<name>RECR_FRATH</name>
<feature type="chain" id="PRO_1000001542" description="Recombination protein RecR">
    <location>
        <begin position="1"/>
        <end position="200"/>
    </location>
</feature>
<feature type="domain" description="Toprim" evidence="1">
    <location>
        <begin position="83"/>
        <end position="177"/>
    </location>
</feature>
<feature type="zinc finger region" description="C4-type" evidence="1">
    <location>
        <begin position="60"/>
        <end position="75"/>
    </location>
</feature>
<proteinExistence type="inferred from homology"/>
<accession>Q2A2I5</accession>
<evidence type="ECO:0000255" key="1">
    <source>
        <dbReference type="HAMAP-Rule" id="MF_00017"/>
    </source>
</evidence>
<sequence>MTSKIFSPKISAVIESLRKLPTIGKKSSQRLALYLLDKSPETAIAIANSLLDATANIKKCVYCQALTEDDVCNICSNTNRDDTKLCIIESMLDMIAIEEAGIYRGKYFVLNGRISPLDGIGPSELKLDILQQIIADRKIDEVILAISPTVEGETTAHFISQMIAKDIKISRIGFGVPFGGELEYLDQQTLLHAFNTRTNI</sequence>
<protein>
    <recommendedName>
        <fullName evidence="1">Recombination protein RecR</fullName>
    </recommendedName>
</protein>
<comment type="function">
    <text evidence="1">May play a role in DNA repair. It seems to be involved in an RecBC-independent recombinational process of DNA repair. It may act with RecF and RecO.</text>
</comment>
<comment type="similarity">
    <text evidence="1">Belongs to the RecR family.</text>
</comment>
<reference key="1">
    <citation type="submission" date="2006-03" db="EMBL/GenBank/DDBJ databases">
        <title>Complete genome sequence of Francisella tularensis LVS (Live Vaccine Strain).</title>
        <authorList>
            <person name="Chain P."/>
            <person name="Larimer F."/>
            <person name="Land M."/>
            <person name="Stilwagen S."/>
            <person name="Larsson P."/>
            <person name="Bearden S."/>
            <person name="Chu M."/>
            <person name="Oyston P."/>
            <person name="Forsman M."/>
            <person name="Andersson S."/>
            <person name="Lindler L."/>
            <person name="Titball R."/>
            <person name="Garcia E."/>
        </authorList>
    </citation>
    <scope>NUCLEOTIDE SEQUENCE [LARGE SCALE GENOMIC DNA]</scope>
    <source>
        <strain>LVS</strain>
    </source>
</reference>
<gene>
    <name evidence="1" type="primary">recR</name>
    <name type="ordered locus">FTL_1412</name>
</gene>